<name>CH60_BURM9</name>
<evidence type="ECO:0000255" key="1">
    <source>
        <dbReference type="HAMAP-Rule" id="MF_00600"/>
    </source>
</evidence>
<feature type="chain" id="PRO_1000025759" description="Chaperonin GroEL">
    <location>
        <begin position="1"/>
        <end position="550"/>
    </location>
</feature>
<feature type="binding site" evidence="1">
    <location>
        <begin position="30"/>
        <end position="33"/>
    </location>
    <ligand>
        <name>ATP</name>
        <dbReference type="ChEBI" id="CHEBI:30616"/>
    </ligand>
</feature>
<feature type="binding site" evidence="1">
    <location>
        <position position="51"/>
    </location>
    <ligand>
        <name>ATP</name>
        <dbReference type="ChEBI" id="CHEBI:30616"/>
    </ligand>
</feature>
<feature type="binding site" evidence="1">
    <location>
        <begin position="87"/>
        <end position="91"/>
    </location>
    <ligand>
        <name>ATP</name>
        <dbReference type="ChEBI" id="CHEBI:30616"/>
    </ligand>
</feature>
<feature type="binding site" evidence="1">
    <location>
        <position position="415"/>
    </location>
    <ligand>
        <name>ATP</name>
        <dbReference type="ChEBI" id="CHEBI:30616"/>
    </ligand>
</feature>
<feature type="binding site" evidence="1">
    <location>
        <begin position="479"/>
        <end position="481"/>
    </location>
    <ligand>
        <name>ATP</name>
        <dbReference type="ChEBI" id="CHEBI:30616"/>
    </ligand>
</feature>
<feature type="binding site" evidence="1">
    <location>
        <position position="495"/>
    </location>
    <ligand>
        <name>ATP</name>
        <dbReference type="ChEBI" id="CHEBI:30616"/>
    </ligand>
</feature>
<reference key="1">
    <citation type="journal article" date="2010" name="Genome Biol. Evol.">
        <title>Continuing evolution of Burkholderia mallei through genome reduction and large-scale rearrangements.</title>
        <authorList>
            <person name="Losada L."/>
            <person name="Ronning C.M."/>
            <person name="DeShazer D."/>
            <person name="Woods D."/>
            <person name="Fedorova N."/>
            <person name="Kim H.S."/>
            <person name="Shabalina S.A."/>
            <person name="Pearson T.R."/>
            <person name="Brinkac L."/>
            <person name="Tan P."/>
            <person name="Nandi T."/>
            <person name="Crabtree J."/>
            <person name="Badger J."/>
            <person name="Beckstrom-Sternberg S."/>
            <person name="Saqib M."/>
            <person name="Schutzer S.E."/>
            <person name="Keim P."/>
            <person name="Nierman W.C."/>
        </authorList>
    </citation>
    <scope>NUCLEOTIDE SEQUENCE [LARGE SCALE GENOMIC DNA]</scope>
    <source>
        <strain>NCTC 10229</strain>
    </source>
</reference>
<proteinExistence type="inferred from homology"/>
<comment type="function">
    <text evidence="1">Together with its co-chaperonin GroES, plays an essential role in assisting protein folding. The GroEL-GroES system forms a nano-cage that allows encapsulation of the non-native substrate proteins and provides a physical environment optimized to promote and accelerate protein folding.</text>
</comment>
<comment type="catalytic activity">
    <reaction evidence="1">
        <text>ATP + H2O + a folded polypeptide = ADP + phosphate + an unfolded polypeptide.</text>
        <dbReference type="EC" id="5.6.1.7"/>
    </reaction>
</comment>
<comment type="subunit">
    <text evidence="1">Forms a cylinder of 14 subunits composed of two heptameric rings stacked back-to-back. Interacts with the co-chaperonin GroES.</text>
</comment>
<comment type="subcellular location">
    <subcellularLocation>
        <location evidence="1">Cytoplasm</location>
    </subcellularLocation>
</comment>
<comment type="similarity">
    <text evidence="1">Belongs to the chaperonin (HSP60) family.</text>
</comment>
<gene>
    <name evidence="1" type="primary">groEL</name>
    <name evidence="1" type="synonym">groL</name>
    <name type="ordered locus">BMA10229_A2742</name>
</gene>
<keyword id="KW-0067">ATP-binding</keyword>
<keyword id="KW-0143">Chaperone</keyword>
<keyword id="KW-0963">Cytoplasm</keyword>
<keyword id="KW-0413">Isomerase</keyword>
<keyword id="KW-0547">Nucleotide-binding</keyword>
<accession>A2S9S5</accession>
<protein>
    <recommendedName>
        <fullName evidence="1">Chaperonin GroEL</fullName>
        <ecNumber evidence="1">5.6.1.7</ecNumber>
    </recommendedName>
    <alternativeName>
        <fullName evidence="1">60 kDa chaperonin</fullName>
    </alternativeName>
    <alternativeName>
        <fullName evidence="1">Chaperonin-60</fullName>
        <shortName evidence="1">Cpn60</shortName>
    </alternativeName>
</protein>
<sequence>MAAKDVVFGDSARAKMVEGVNILANAVKVTLGPKGRNVVLERSFGGPTVTKDGVSVAKEIELKDKLQNMGAQMVKEVASKTSDNAGDGTTTATVLAQSIVREGMKYVASGMNPMDLKRGIDKAVAAAVEELKKISKPCTTNKEIAQVGAISANSDSSIGDRIAEAMDKVGKEGVITVEDGKSLADELDVVEGMQFDRGYLSPYFINNPDKQVAVLENPFVLLHDKKVSNIRDLLPVLEQVAKAGRPLLIIAEDVEGEALATLVVNNIRGILKTVAVKAPGFGDRRKAMLEDIAILTGGQVIAEETGLTLEKATLAELGQAKRIEVGKENTTIIDGAGEAVNIEARVKQIRTQIEEATSDYDREKLQERVAKLAGGVAVIKVGAATEVEMKEKKARVEDALHATRAAVEEGIVPGGGVALIRARTAIASLTGVNADQNAGIKIVLRAMEEPLRQIVTNGGEEASVVVAAVAAGKGNYGYNAATGEYVDMVEAGVVDPTKVTRTALQNAASVAGLLLTTDAAVAELPKEDAPMPGGMPGGMGGMGMGMGMDM</sequence>
<dbReference type="EC" id="5.6.1.7" evidence="1"/>
<dbReference type="EMBL" id="CP000546">
    <property type="protein sequence ID" value="ABN01559.1"/>
    <property type="molecule type" value="Genomic_DNA"/>
</dbReference>
<dbReference type="RefSeq" id="WP_004185913.1">
    <property type="nucleotide sequence ID" value="NC_008836.1"/>
</dbReference>
<dbReference type="SMR" id="A2S9S5"/>
<dbReference type="GeneID" id="92979713"/>
<dbReference type="KEGG" id="bml:BMA10229_A2742"/>
<dbReference type="HOGENOM" id="CLU_016503_3_0_4"/>
<dbReference type="Proteomes" id="UP000002283">
    <property type="component" value="Chromosome I"/>
</dbReference>
<dbReference type="GO" id="GO:0005737">
    <property type="term" value="C:cytoplasm"/>
    <property type="evidence" value="ECO:0007669"/>
    <property type="project" value="UniProtKB-SubCell"/>
</dbReference>
<dbReference type="GO" id="GO:0005524">
    <property type="term" value="F:ATP binding"/>
    <property type="evidence" value="ECO:0007669"/>
    <property type="project" value="UniProtKB-UniRule"/>
</dbReference>
<dbReference type="GO" id="GO:0140662">
    <property type="term" value="F:ATP-dependent protein folding chaperone"/>
    <property type="evidence" value="ECO:0007669"/>
    <property type="project" value="InterPro"/>
</dbReference>
<dbReference type="GO" id="GO:0016853">
    <property type="term" value="F:isomerase activity"/>
    <property type="evidence" value="ECO:0007669"/>
    <property type="project" value="UniProtKB-KW"/>
</dbReference>
<dbReference type="GO" id="GO:0051082">
    <property type="term" value="F:unfolded protein binding"/>
    <property type="evidence" value="ECO:0007669"/>
    <property type="project" value="UniProtKB-UniRule"/>
</dbReference>
<dbReference type="GO" id="GO:0042026">
    <property type="term" value="P:protein refolding"/>
    <property type="evidence" value="ECO:0007669"/>
    <property type="project" value="UniProtKB-UniRule"/>
</dbReference>
<dbReference type="CDD" id="cd03344">
    <property type="entry name" value="GroEL"/>
    <property type="match status" value="1"/>
</dbReference>
<dbReference type="FunFam" id="1.10.560.10:FF:000001">
    <property type="entry name" value="60 kDa chaperonin"/>
    <property type="match status" value="1"/>
</dbReference>
<dbReference type="FunFam" id="3.50.7.10:FF:000001">
    <property type="entry name" value="60 kDa chaperonin"/>
    <property type="match status" value="1"/>
</dbReference>
<dbReference type="Gene3D" id="3.50.7.10">
    <property type="entry name" value="GroEL"/>
    <property type="match status" value="1"/>
</dbReference>
<dbReference type="Gene3D" id="1.10.560.10">
    <property type="entry name" value="GroEL-like equatorial domain"/>
    <property type="match status" value="1"/>
</dbReference>
<dbReference type="Gene3D" id="3.30.260.10">
    <property type="entry name" value="TCP-1-like chaperonin intermediate domain"/>
    <property type="match status" value="1"/>
</dbReference>
<dbReference type="HAMAP" id="MF_00600">
    <property type="entry name" value="CH60"/>
    <property type="match status" value="1"/>
</dbReference>
<dbReference type="InterPro" id="IPR018370">
    <property type="entry name" value="Chaperonin_Cpn60_CS"/>
</dbReference>
<dbReference type="InterPro" id="IPR001844">
    <property type="entry name" value="Cpn60/GroEL"/>
</dbReference>
<dbReference type="InterPro" id="IPR002423">
    <property type="entry name" value="Cpn60/GroEL/TCP-1"/>
</dbReference>
<dbReference type="InterPro" id="IPR027409">
    <property type="entry name" value="GroEL-like_apical_dom_sf"/>
</dbReference>
<dbReference type="InterPro" id="IPR027413">
    <property type="entry name" value="GROEL-like_equatorial_sf"/>
</dbReference>
<dbReference type="InterPro" id="IPR027410">
    <property type="entry name" value="TCP-1-like_intermed_sf"/>
</dbReference>
<dbReference type="NCBIfam" id="TIGR02348">
    <property type="entry name" value="GroEL"/>
    <property type="match status" value="1"/>
</dbReference>
<dbReference type="NCBIfam" id="NF000592">
    <property type="entry name" value="PRK00013.1"/>
    <property type="match status" value="1"/>
</dbReference>
<dbReference type="NCBIfam" id="NF009487">
    <property type="entry name" value="PRK12849.1"/>
    <property type="match status" value="1"/>
</dbReference>
<dbReference type="NCBIfam" id="NF009488">
    <property type="entry name" value="PRK12850.1"/>
    <property type="match status" value="1"/>
</dbReference>
<dbReference type="NCBIfam" id="NF009489">
    <property type="entry name" value="PRK12851.1"/>
    <property type="match status" value="1"/>
</dbReference>
<dbReference type="PANTHER" id="PTHR45633">
    <property type="entry name" value="60 KDA HEAT SHOCK PROTEIN, MITOCHONDRIAL"/>
    <property type="match status" value="1"/>
</dbReference>
<dbReference type="Pfam" id="PF00118">
    <property type="entry name" value="Cpn60_TCP1"/>
    <property type="match status" value="1"/>
</dbReference>
<dbReference type="PRINTS" id="PR00298">
    <property type="entry name" value="CHAPERONIN60"/>
</dbReference>
<dbReference type="SUPFAM" id="SSF52029">
    <property type="entry name" value="GroEL apical domain-like"/>
    <property type="match status" value="1"/>
</dbReference>
<dbReference type="SUPFAM" id="SSF48592">
    <property type="entry name" value="GroEL equatorial domain-like"/>
    <property type="match status" value="1"/>
</dbReference>
<dbReference type="SUPFAM" id="SSF54849">
    <property type="entry name" value="GroEL-intermediate domain like"/>
    <property type="match status" value="1"/>
</dbReference>
<dbReference type="PROSITE" id="PS00296">
    <property type="entry name" value="CHAPERONINS_CPN60"/>
    <property type="match status" value="1"/>
</dbReference>
<organism>
    <name type="scientific">Burkholderia mallei (strain NCTC 10229)</name>
    <dbReference type="NCBI Taxonomy" id="412022"/>
    <lineage>
        <taxon>Bacteria</taxon>
        <taxon>Pseudomonadati</taxon>
        <taxon>Pseudomonadota</taxon>
        <taxon>Betaproteobacteria</taxon>
        <taxon>Burkholderiales</taxon>
        <taxon>Burkholderiaceae</taxon>
        <taxon>Burkholderia</taxon>
        <taxon>pseudomallei group</taxon>
    </lineage>
</organism>